<proteinExistence type="evidence at transcript level"/>
<dbReference type="EMBL" id="BC089887">
    <property type="protein sequence ID" value="AAH89887.1"/>
    <property type="molecule type" value="mRNA"/>
</dbReference>
<dbReference type="RefSeq" id="NP_001030084.1">
    <property type="nucleotide sequence ID" value="NM_001034912.1"/>
</dbReference>
<dbReference type="RefSeq" id="XP_008759043.1">
    <property type="nucleotide sequence ID" value="XM_008760821.2"/>
</dbReference>
<dbReference type="RefSeq" id="XP_008773314.1">
    <property type="nucleotide sequence ID" value="XM_008775092.1"/>
</dbReference>
<dbReference type="FunCoup" id="Q5FVM3">
    <property type="interactions" value="373"/>
</dbReference>
<dbReference type="STRING" id="10116.ENSRNOP00000069183"/>
<dbReference type="GlyGen" id="Q5FVM3">
    <property type="glycosylation" value="1 site"/>
</dbReference>
<dbReference type="iPTMnet" id="Q5FVM3"/>
<dbReference type="PhosphoSitePlus" id="Q5FVM3"/>
<dbReference type="PaxDb" id="10116-ENSRNOP00000062258"/>
<dbReference type="Ensembl" id="ENSRNOT00000063951.4">
    <property type="protein sequence ID" value="ENSRNOP00000062258.2"/>
    <property type="gene ID" value="ENSRNOG00000010589.8"/>
</dbReference>
<dbReference type="GeneID" id="619558"/>
<dbReference type="KEGG" id="rno:619558"/>
<dbReference type="UCSC" id="RGD:1565003">
    <property type="organism name" value="rat"/>
</dbReference>
<dbReference type="AGR" id="RGD:1565003"/>
<dbReference type="CTD" id="54463"/>
<dbReference type="RGD" id="1565003">
    <property type="gene designation" value="Retreg1"/>
</dbReference>
<dbReference type="eggNOG" id="ENOG502QPW8">
    <property type="taxonomic scope" value="Eukaryota"/>
</dbReference>
<dbReference type="GeneTree" id="ENSGT00390000018047"/>
<dbReference type="InParanoid" id="Q5FVM3"/>
<dbReference type="OrthoDB" id="61139at9989"/>
<dbReference type="PhylomeDB" id="Q5FVM3"/>
<dbReference type="PRO" id="PR:Q5FVM3"/>
<dbReference type="Proteomes" id="UP000002494">
    <property type="component" value="Chromosome 2"/>
</dbReference>
<dbReference type="Bgee" id="ENSRNOG00000010589">
    <property type="expression patterns" value="Expressed in stomach and 18 other cell types or tissues"/>
</dbReference>
<dbReference type="ExpressionAtlas" id="Q5FVM3">
    <property type="expression patterns" value="baseline and differential"/>
</dbReference>
<dbReference type="GO" id="GO:0005801">
    <property type="term" value="C:cis-Golgi network"/>
    <property type="evidence" value="ECO:0000250"/>
    <property type="project" value="UniProtKB"/>
</dbReference>
<dbReference type="GO" id="GO:0005783">
    <property type="term" value="C:endoplasmic reticulum"/>
    <property type="evidence" value="ECO:0000266"/>
    <property type="project" value="RGD"/>
</dbReference>
<dbReference type="GO" id="GO:0005789">
    <property type="term" value="C:endoplasmic reticulum membrane"/>
    <property type="evidence" value="ECO:0000250"/>
    <property type="project" value="GO_Central"/>
</dbReference>
<dbReference type="GO" id="GO:0140506">
    <property type="term" value="F:endoplasmic reticulum-autophagosome adaptor activity"/>
    <property type="evidence" value="ECO:0000266"/>
    <property type="project" value="RGD"/>
</dbReference>
<dbReference type="GO" id="GO:0006914">
    <property type="term" value="P:autophagy"/>
    <property type="evidence" value="ECO:0000266"/>
    <property type="project" value="RGD"/>
</dbReference>
<dbReference type="GO" id="GO:0030574">
    <property type="term" value="P:collagen catabolic process"/>
    <property type="evidence" value="ECO:0000266"/>
    <property type="project" value="RGD"/>
</dbReference>
<dbReference type="GO" id="GO:0007029">
    <property type="term" value="P:endoplasmic reticulum organization"/>
    <property type="evidence" value="ECO:0000266"/>
    <property type="project" value="RGD"/>
</dbReference>
<dbReference type="GO" id="GO:0000423">
    <property type="term" value="P:mitophagy"/>
    <property type="evidence" value="ECO:0000266"/>
    <property type="project" value="RGD"/>
</dbReference>
<dbReference type="GO" id="GO:0043524">
    <property type="term" value="P:negative regulation of neuron apoptotic process"/>
    <property type="evidence" value="ECO:0000250"/>
    <property type="project" value="GO_Central"/>
</dbReference>
<dbReference type="GO" id="GO:0061709">
    <property type="term" value="P:reticulophagy"/>
    <property type="evidence" value="ECO:0000250"/>
    <property type="project" value="GO_Central"/>
</dbReference>
<dbReference type="GO" id="GO:0019233">
    <property type="term" value="P:sensory perception of pain"/>
    <property type="evidence" value="ECO:0000250"/>
    <property type="project" value="UniProtKB"/>
</dbReference>
<dbReference type="GO" id="GO:0050872">
    <property type="term" value="P:white fat cell differentiation"/>
    <property type="evidence" value="ECO:0000266"/>
    <property type="project" value="RGD"/>
</dbReference>
<dbReference type="CDD" id="cd22560">
    <property type="entry name" value="RETR1_RHD"/>
    <property type="match status" value="1"/>
</dbReference>
<dbReference type="InterPro" id="IPR055255">
    <property type="entry name" value="RETR1_RHD"/>
</dbReference>
<dbReference type="InterPro" id="IPR043384">
    <property type="entry name" value="RETREG1/3"/>
</dbReference>
<dbReference type="PANTHER" id="PTHR28659">
    <property type="entry name" value="RETICULON-LIKE PROTEIN"/>
    <property type="match status" value="1"/>
</dbReference>
<dbReference type="PANTHER" id="PTHR28659:SF3">
    <property type="entry name" value="RETICULOPHAGY REGULATOR 1"/>
    <property type="match status" value="1"/>
</dbReference>
<dbReference type="Pfam" id="PF24456">
    <property type="entry name" value="RHD_RETREG1-3"/>
    <property type="match status" value="1"/>
</dbReference>
<feature type="chain" id="PRO_0000288468" description="Reticulophagy regulator 1">
    <location>
        <begin position="1"/>
        <end position="480"/>
    </location>
</feature>
<feature type="topological domain" description="Cytoplasmic" evidence="2">
    <location>
        <begin position="1"/>
        <end position="43"/>
    </location>
</feature>
<feature type="transmembrane region" description="Helical" evidence="3">
    <location>
        <begin position="44"/>
        <end position="64"/>
    </location>
</feature>
<feature type="topological domain" description="Lumenal" evidence="5">
    <location>
        <begin position="65"/>
        <end position="78"/>
    </location>
</feature>
<feature type="transmembrane region" description="Helical" evidence="3">
    <location>
        <begin position="79"/>
        <end position="99"/>
    </location>
</feature>
<feature type="topological domain" description="Cytoplasmic" evidence="5">
    <location>
        <begin position="100"/>
        <end position="101"/>
    </location>
</feature>
<feature type="transmembrane region" description="Helical" evidence="3">
    <location>
        <begin position="102"/>
        <end position="122"/>
    </location>
</feature>
<feature type="topological domain" description="Lumenal" evidence="5">
    <location>
        <begin position="123"/>
        <end position="191"/>
    </location>
</feature>
<feature type="transmembrane region" description="Helical" evidence="3">
    <location>
        <begin position="192"/>
        <end position="212"/>
    </location>
</feature>
<feature type="topological domain" description="Cytoplasmic" evidence="2">
    <location>
        <begin position="213"/>
        <end position="480"/>
    </location>
</feature>
<feature type="region of interest" description="Disordered" evidence="4">
    <location>
        <begin position="1"/>
        <end position="41"/>
    </location>
</feature>
<feature type="region of interest" description="Reticulon homology domain" evidence="2">
    <location>
        <begin position="67"/>
        <end position="216"/>
    </location>
</feature>
<feature type="region of interest" description="Disordered" evidence="4">
    <location>
        <begin position="302"/>
        <end position="348"/>
    </location>
</feature>
<feature type="region of interest" description="Disordered" evidence="4">
    <location>
        <begin position="450"/>
        <end position="480"/>
    </location>
</feature>
<feature type="short sequence motif" description="LIR motif" evidence="2">
    <location>
        <begin position="436"/>
        <end position="441"/>
    </location>
</feature>
<feature type="compositionally biased region" description="Basic and acidic residues" evidence="4">
    <location>
        <begin position="1"/>
        <end position="10"/>
    </location>
</feature>
<feature type="compositionally biased region" description="Polar residues" evidence="4">
    <location>
        <begin position="302"/>
        <end position="313"/>
    </location>
</feature>
<feature type="compositionally biased region" description="Basic and acidic residues" evidence="4">
    <location>
        <begin position="317"/>
        <end position="331"/>
    </location>
</feature>
<feature type="compositionally biased region" description="Polar residues" evidence="4">
    <location>
        <begin position="454"/>
        <end position="473"/>
    </location>
</feature>
<feature type="modified residue" description="Phosphoserine" evidence="2">
    <location>
        <position position="132"/>
    </location>
</feature>
<feature type="modified residue" description="Phosphoserine; by CAMK2B" evidence="2">
    <location>
        <position position="134"/>
    </location>
</feature>
<feature type="modified residue" description="Phosphoserine" evidence="2">
    <location>
        <position position="136"/>
    </location>
</feature>
<reference key="1">
    <citation type="journal article" date="2004" name="Genome Res.">
        <title>The status, quality, and expansion of the NIH full-length cDNA project: the Mammalian Gene Collection (MGC).</title>
        <authorList>
            <consortium name="The MGC Project Team"/>
        </authorList>
    </citation>
    <scope>NUCLEOTIDE SEQUENCE [LARGE SCALE MRNA]</scope>
    <source>
        <tissue>Liver</tissue>
    </source>
</reference>
<gene>
    <name evidence="6" type="primary">Retreg1</name>
    <name type="synonym">Fam134b</name>
</gene>
<sequence>MASPAPEEHATQGCPATEEQEPRPGVPGEEAGPEGAGPQVEEAAGRVAAALTWLLGEPVLWLGWRADELLSWKRPLRSLLAFLGANLLFWFLALTPWRVYHLISVMILGRVIMQIIKDMVLSRARGAQLWRSLSESWEVINSKPDERPRLSHCIAESWMNFSIFLQEMSLFKQQSPGKFCLLVCSVCTFFTILGSYIPGVILSYLLLLFAFLCPLFKCNDIGQKIYSKVKSILLKLDFGIGEYINQKKRERSEADKEKSHKDDSEIDFSALCPKISLTVAAKELSVSDTDVSEVSWTDNGTFNLSEGYTPQTDTSDDLDRPSEEVFSRDLSDFPSLENGAGTNDEDELSLGLPTELKTKKQQLNSAHRPSKDRQSAAGLSLPLKSDQALHLMSNLAGDVITAAMTAAIKDQLEGARQALAQAAPTPGDDTDTEEGDDFELLDQAELDQIESELGLTQDQGAEAQQSKKSSGFLSNLLGGH</sequence>
<keyword id="KW-0072">Autophagy</keyword>
<keyword id="KW-0256">Endoplasmic reticulum</keyword>
<keyword id="KW-0333">Golgi apparatus</keyword>
<keyword id="KW-0472">Membrane</keyword>
<keyword id="KW-0597">Phosphoprotein</keyword>
<keyword id="KW-1185">Reference proteome</keyword>
<keyword id="KW-0812">Transmembrane</keyword>
<keyword id="KW-1133">Transmembrane helix</keyword>
<comment type="function">
    <text evidence="1 2">Endoplasmic reticulum (ER)-anchored autophagy regulator which mediates ER delivery into lysosomes through sequestration into autophagosomes. Promotes membrane remodeling and ER scission via its membrane bending capacity and targets the fragments into autophagosomes via interaction with ATG8 family proteins. Active under basal conditions. Required for collagen quality control in a LIR motif-dependent manner. Required for long-term survival of nociceptive and autonomic ganglion neurons.</text>
</comment>
<comment type="subunit">
    <text evidence="2">Homooligomer; oligomerization is enhanced following endoplasmic reticulum stress and is mediated by the reticulon homology domain (By similarity). Interacts with ATG8 family modifier proteins MAP1LC3A, MAP1LC3B, GABARAP, GABARAPL1 and GABARAPL2.</text>
</comment>
<comment type="subcellular location">
    <subcellularLocation>
        <location evidence="1">Golgi apparatus</location>
        <location evidence="1">cis-Golgi network membrane</location>
        <topology evidence="3">Multi-pass membrane protein</topology>
    </subcellularLocation>
    <subcellularLocation>
        <location evidence="2">Endoplasmic reticulum membrane</location>
        <topology evidence="3">Multi-pass membrane protein</topology>
    </subcellularLocation>
</comment>
<comment type="domain">
    <text evidence="2">The LIR motif interacts with ATG8 family proteins and is necessary to target the ER fragments to autophagosomes for lysosomal degradation.</text>
</comment>
<comment type="domain">
    <text evidence="2 5">The reticulon homology domain provides capacity to bend the membrane and promotes ER scission (By similarity). It is required for homooligomerization (By similarity). This domain does not show relevant similarities with reticulon domains, preventing any domain predictions within the protein sequence.</text>
</comment>
<comment type="PTM">
    <text evidence="2">Phosphorylation at Ser-134 by CAMK2B enhances oligomerization and membrane scission and reticulophagy activity.</text>
</comment>
<comment type="similarity">
    <text evidence="5">Belongs to the RETREG family.</text>
</comment>
<organism>
    <name type="scientific">Rattus norvegicus</name>
    <name type="common">Rat</name>
    <dbReference type="NCBI Taxonomy" id="10116"/>
    <lineage>
        <taxon>Eukaryota</taxon>
        <taxon>Metazoa</taxon>
        <taxon>Chordata</taxon>
        <taxon>Craniata</taxon>
        <taxon>Vertebrata</taxon>
        <taxon>Euteleostomi</taxon>
        <taxon>Mammalia</taxon>
        <taxon>Eutheria</taxon>
        <taxon>Euarchontoglires</taxon>
        <taxon>Glires</taxon>
        <taxon>Rodentia</taxon>
        <taxon>Myomorpha</taxon>
        <taxon>Muroidea</taxon>
        <taxon>Muridae</taxon>
        <taxon>Murinae</taxon>
        <taxon>Rattus</taxon>
    </lineage>
</organism>
<evidence type="ECO:0000250" key="1">
    <source>
        <dbReference type="UniProtKB" id="Q8VE91"/>
    </source>
</evidence>
<evidence type="ECO:0000250" key="2">
    <source>
        <dbReference type="UniProtKB" id="Q9H6L5"/>
    </source>
</evidence>
<evidence type="ECO:0000255" key="3"/>
<evidence type="ECO:0000256" key="4">
    <source>
        <dbReference type="SAM" id="MobiDB-lite"/>
    </source>
</evidence>
<evidence type="ECO:0000305" key="5"/>
<evidence type="ECO:0000312" key="6">
    <source>
        <dbReference type="RGD" id="1565003"/>
    </source>
</evidence>
<name>RETR1_RAT</name>
<protein>
    <recommendedName>
        <fullName>Reticulophagy regulator 1</fullName>
    </recommendedName>
    <alternativeName>
        <fullName evidence="5">Reticulophagy receptor 1</fullName>
    </alternativeName>
</protein>
<accession>Q5FVM3</accession>